<name>LRP12_MOUSE</name>
<sequence length="858" mass="94551">MARRWSTKESQRRGSAWLLLFLAGVYGNGALAELSENVHISGVSTACGESPEQIRAPSGIITSPGWPSDYPAQVNCSWLIRANPGEIITISFQDFDIQGSRRCTLDWLTIETYKNIESYRACGSTIPPPYISSQDHVWIRFHSDDSVSRKGFRLAYFSGKSEQPDCACDQFRCGNGKCIPEAWKCNSMDECGDSSDEEVCASDAHPPTTTAFQPCAYNQFQCLSRFTKVYTCLPESLKCDGNIDCLDLGDEIDCDMPTCGQWLKYFYGTFNSPNYPDFYPPGSNCTWLIDTGDHRKVILRFTDFKLDGTGYGDYVKIYDGLEENPRKLLRVLTAFDSHAPLTVVSSSGQIRVHFCADKVNAARGFNATYQVDGFCLPWEIPCGGNWGCYTEQQRCDGYWHCPNGRDEINCTMCQKEEFPCSRNGVCYPRSDRCNYQNHCPNGSDEKNCFFCQPGNFHCKNNRCVFESWVCDSQDDCGDGSDEENCPVIVPTRVITAAVIGSLICGLLLVIALGCTCKLYSLRMFERRSFETQLSRVEAELLRREAPPSYGQLIAQGLIPPVEDFPVCSPNQASVLENLRLAVRSQLGFTSIRLPMTGRSSNIWNRIFNFARSRHSGSLALVSGDGDEVVPSQSSSRETERSRPHRSLFSVESDDTDTENERRDTAGASGGVAAPLPQKVPPTTAVEATVGSGGNSSAQSTRGGHADGREVSSVEAPSVSPARHQLTSALSRMTQGLRWVRFTLGRSSSTTQNRSPLRQLDTAVSGREDDDDVEMLIPVSDGASDIDANDCSRPLLDLASDQVQGFRQPHSAGNPGVRTSNRDGPCERCGIVHTAQIPDTCLEATVKTETSDDEALLLC</sequence>
<gene>
    <name type="primary">Lrp12</name>
</gene>
<keyword id="KW-0025">Alternative splicing</keyword>
<keyword id="KW-0168">Coated pit</keyword>
<keyword id="KW-1015">Disulfide bond</keyword>
<keyword id="KW-0254">Endocytosis</keyword>
<keyword id="KW-0325">Glycoprotein</keyword>
<keyword id="KW-0472">Membrane</keyword>
<keyword id="KW-0675">Receptor</keyword>
<keyword id="KW-1185">Reference proteome</keyword>
<keyword id="KW-0677">Repeat</keyword>
<keyword id="KW-0732">Signal</keyword>
<keyword id="KW-0812">Transmembrane</keyword>
<keyword id="KW-1133">Transmembrane helix</keyword>
<dbReference type="EMBL" id="AK050512">
    <property type="protein sequence ID" value="BAC34299.1"/>
    <property type="molecule type" value="mRNA"/>
</dbReference>
<dbReference type="EMBL" id="AK084675">
    <property type="protein sequence ID" value="BAC39247.1"/>
    <property type="status" value="ALT_SEQ"/>
    <property type="molecule type" value="mRNA"/>
</dbReference>
<dbReference type="EMBL" id="BC058345">
    <property type="protein sequence ID" value="AAH58345.1"/>
    <property type="molecule type" value="mRNA"/>
</dbReference>
<dbReference type="CCDS" id="CCDS27446.1">
    <molecule id="Q8BUJ9-1"/>
</dbReference>
<dbReference type="CCDS" id="CCDS84168.1">
    <molecule id="Q8BUJ9-2"/>
</dbReference>
<dbReference type="RefSeq" id="NP_001333965.1">
    <molecule id="Q8BUJ9-2"/>
    <property type="nucleotide sequence ID" value="NM_001347036.2"/>
</dbReference>
<dbReference type="RefSeq" id="NP_766402.1">
    <molecule id="Q8BUJ9-1"/>
    <property type="nucleotide sequence ID" value="NM_172814.4"/>
</dbReference>
<dbReference type="BioGRID" id="232078">
    <property type="interactions" value="1"/>
</dbReference>
<dbReference type="FunCoup" id="Q8BUJ9">
    <property type="interactions" value="1561"/>
</dbReference>
<dbReference type="STRING" id="10090.ENSMUSP00000022916"/>
<dbReference type="GlyCosmos" id="Q8BUJ9">
    <property type="glycosylation" value="5 sites, No reported glycans"/>
</dbReference>
<dbReference type="GlyGen" id="Q8BUJ9">
    <property type="glycosylation" value="5 sites, 2 N-linked glycans (2 sites)"/>
</dbReference>
<dbReference type="iPTMnet" id="Q8BUJ9"/>
<dbReference type="PhosphoSitePlus" id="Q8BUJ9"/>
<dbReference type="SwissPalm" id="Q8BUJ9"/>
<dbReference type="jPOST" id="Q8BUJ9"/>
<dbReference type="PaxDb" id="10090-ENSMUSP00000022916"/>
<dbReference type="ProteomicsDB" id="292112">
    <molecule id="Q8BUJ9-1"/>
</dbReference>
<dbReference type="ProteomicsDB" id="292113">
    <molecule id="Q8BUJ9-2"/>
</dbReference>
<dbReference type="Antibodypedia" id="2508">
    <property type="antibodies" value="181 antibodies from 32 providers"/>
</dbReference>
<dbReference type="DNASU" id="239393"/>
<dbReference type="Ensembl" id="ENSMUST00000022916.13">
    <molecule id="Q8BUJ9-1"/>
    <property type="protein sequence ID" value="ENSMUSP00000022916.6"/>
    <property type="gene ID" value="ENSMUSG00000022305.14"/>
</dbReference>
<dbReference type="Ensembl" id="ENSMUST00000110305.3">
    <molecule id="Q8BUJ9-2"/>
    <property type="protein sequence ID" value="ENSMUSP00000105934.3"/>
    <property type="gene ID" value="ENSMUSG00000022305.14"/>
</dbReference>
<dbReference type="GeneID" id="239393"/>
<dbReference type="KEGG" id="mmu:239393"/>
<dbReference type="UCSC" id="uc007vom.1">
    <molecule id="Q8BUJ9-1"/>
    <property type="organism name" value="mouse"/>
</dbReference>
<dbReference type="UCSC" id="uc007von.1">
    <molecule id="Q8BUJ9-2"/>
    <property type="organism name" value="mouse"/>
</dbReference>
<dbReference type="AGR" id="MGI:2443132"/>
<dbReference type="CTD" id="29967"/>
<dbReference type="MGI" id="MGI:2443132">
    <property type="gene designation" value="Lrp12"/>
</dbReference>
<dbReference type="VEuPathDB" id="HostDB:ENSMUSG00000022305"/>
<dbReference type="eggNOG" id="KOG1215">
    <property type="taxonomic scope" value="Eukaryota"/>
</dbReference>
<dbReference type="GeneTree" id="ENSGT00940000158307"/>
<dbReference type="HOGENOM" id="CLU_013747_0_0_1"/>
<dbReference type="InParanoid" id="Q8BUJ9"/>
<dbReference type="OMA" id="SWYIQAN"/>
<dbReference type="OrthoDB" id="10020456at2759"/>
<dbReference type="PhylomeDB" id="Q8BUJ9"/>
<dbReference type="TreeFam" id="TF332149"/>
<dbReference type="Reactome" id="R-MMU-975634">
    <property type="pathway name" value="Retinoid metabolism and transport"/>
</dbReference>
<dbReference type="BioGRID-ORCS" id="239393">
    <property type="hits" value="0 hits in 77 CRISPR screens"/>
</dbReference>
<dbReference type="PRO" id="PR:Q8BUJ9"/>
<dbReference type="Proteomes" id="UP000000589">
    <property type="component" value="Chromosome 15"/>
</dbReference>
<dbReference type="RNAct" id="Q8BUJ9">
    <property type="molecule type" value="protein"/>
</dbReference>
<dbReference type="Bgee" id="ENSMUSG00000022305">
    <property type="expression patterns" value="Expressed in manus and 235 other cell types or tissues"/>
</dbReference>
<dbReference type="ExpressionAtlas" id="Q8BUJ9">
    <property type="expression patterns" value="baseline and differential"/>
</dbReference>
<dbReference type="GO" id="GO:0005905">
    <property type="term" value="C:clathrin-coated pit"/>
    <property type="evidence" value="ECO:0007669"/>
    <property type="project" value="UniProtKB-KW"/>
</dbReference>
<dbReference type="GO" id="GO:0005886">
    <property type="term" value="C:plasma membrane"/>
    <property type="evidence" value="ECO:0007669"/>
    <property type="project" value="Ensembl"/>
</dbReference>
<dbReference type="GO" id="GO:0005178">
    <property type="term" value="F:integrin binding"/>
    <property type="evidence" value="ECO:0000353"/>
    <property type="project" value="MGI"/>
</dbReference>
<dbReference type="GO" id="GO:0007155">
    <property type="term" value="P:cell adhesion"/>
    <property type="evidence" value="ECO:0000315"/>
    <property type="project" value="MGI"/>
</dbReference>
<dbReference type="GO" id="GO:0016477">
    <property type="term" value="P:cell migration"/>
    <property type="evidence" value="ECO:0000315"/>
    <property type="project" value="MGI"/>
</dbReference>
<dbReference type="GO" id="GO:0006897">
    <property type="term" value="P:endocytosis"/>
    <property type="evidence" value="ECO:0007669"/>
    <property type="project" value="UniProtKB-KW"/>
</dbReference>
<dbReference type="GO" id="GO:0033622">
    <property type="term" value="P:integrin activation"/>
    <property type="evidence" value="ECO:0000315"/>
    <property type="project" value="MGI"/>
</dbReference>
<dbReference type="GO" id="GO:0097021">
    <property type="term" value="P:lymphocyte migration into lymphoid organs"/>
    <property type="evidence" value="ECO:0000315"/>
    <property type="project" value="MGI"/>
</dbReference>
<dbReference type="GO" id="GO:0001764">
    <property type="term" value="P:neuron migration"/>
    <property type="evidence" value="ECO:0000315"/>
    <property type="project" value="MGI"/>
</dbReference>
<dbReference type="GO" id="GO:0031175">
    <property type="term" value="P:neuron projection development"/>
    <property type="evidence" value="ECO:0000315"/>
    <property type="project" value="MGI"/>
</dbReference>
<dbReference type="CDD" id="cd00041">
    <property type="entry name" value="CUB"/>
    <property type="match status" value="2"/>
</dbReference>
<dbReference type="CDD" id="cd00112">
    <property type="entry name" value="LDLa"/>
    <property type="match status" value="4"/>
</dbReference>
<dbReference type="FunFam" id="2.60.120.290:FF:000021">
    <property type="entry name" value="Low-density lipoprotein receptor-related protein 12"/>
    <property type="match status" value="1"/>
</dbReference>
<dbReference type="FunFam" id="2.60.120.290:FF:000024">
    <property type="entry name" value="Low-density lipoprotein receptor-related protein 12"/>
    <property type="match status" value="1"/>
</dbReference>
<dbReference type="FunFam" id="4.10.400.10:FF:000063">
    <property type="entry name" value="low-density lipoprotein receptor-related protein 12"/>
    <property type="match status" value="1"/>
</dbReference>
<dbReference type="FunFam" id="4.10.400.10:FF:000040">
    <property type="entry name" value="low-density lipoprotein receptor-related protein 3"/>
    <property type="match status" value="1"/>
</dbReference>
<dbReference type="FunFam" id="4.10.400.10:FF:000003">
    <property type="entry name" value="Putative low-density lipoprotein receptor-related protein 12"/>
    <property type="match status" value="3"/>
</dbReference>
<dbReference type="Gene3D" id="4.10.400.10">
    <property type="entry name" value="Low-density Lipoprotein Receptor"/>
    <property type="match status" value="5"/>
</dbReference>
<dbReference type="Gene3D" id="2.60.120.290">
    <property type="entry name" value="Spermadhesin, CUB domain"/>
    <property type="match status" value="2"/>
</dbReference>
<dbReference type="InterPro" id="IPR000859">
    <property type="entry name" value="CUB_dom"/>
</dbReference>
<dbReference type="InterPro" id="IPR036055">
    <property type="entry name" value="LDL_receptor-like_sf"/>
</dbReference>
<dbReference type="InterPro" id="IPR023415">
    <property type="entry name" value="LDLR_class-A_CS"/>
</dbReference>
<dbReference type="InterPro" id="IPR002172">
    <property type="entry name" value="LDrepeatLR_classA_rpt"/>
</dbReference>
<dbReference type="InterPro" id="IPR035914">
    <property type="entry name" value="Sperma_CUB_dom_sf"/>
</dbReference>
<dbReference type="PANTHER" id="PTHR24251:SF30">
    <property type="entry name" value="MEMBRANE FRIZZLED-RELATED PROTEIN"/>
    <property type="match status" value="1"/>
</dbReference>
<dbReference type="PANTHER" id="PTHR24251">
    <property type="entry name" value="OVOCHYMASE-RELATED"/>
    <property type="match status" value="1"/>
</dbReference>
<dbReference type="Pfam" id="PF00431">
    <property type="entry name" value="CUB"/>
    <property type="match status" value="2"/>
</dbReference>
<dbReference type="Pfam" id="PF00057">
    <property type="entry name" value="Ldl_recept_a"/>
    <property type="match status" value="4"/>
</dbReference>
<dbReference type="PRINTS" id="PR00261">
    <property type="entry name" value="LDLRECEPTOR"/>
</dbReference>
<dbReference type="SMART" id="SM00042">
    <property type="entry name" value="CUB"/>
    <property type="match status" value="2"/>
</dbReference>
<dbReference type="SMART" id="SM00192">
    <property type="entry name" value="LDLa"/>
    <property type="match status" value="5"/>
</dbReference>
<dbReference type="SUPFAM" id="SSF57424">
    <property type="entry name" value="LDL receptor-like module"/>
    <property type="match status" value="5"/>
</dbReference>
<dbReference type="SUPFAM" id="SSF49854">
    <property type="entry name" value="Spermadhesin, CUB domain"/>
    <property type="match status" value="2"/>
</dbReference>
<dbReference type="PROSITE" id="PS01180">
    <property type="entry name" value="CUB"/>
    <property type="match status" value="2"/>
</dbReference>
<dbReference type="PROSITE" id="PS01209">
    <property type="entry name" value="LDLRA_1"/>
    <property type="match status" value="2"/>
</dbReference>
<dbReference type="PROSITE" id="PS50068">
    <property type="entry name" value="LDLRA_2"/>
    <property type="match status" value="5"/>
</dbReference>
<organism>
    <name type="scientific">Mus musculus</name>
    <name type="common">Mouse</name>
    <dbReference type="NCBI Taxonomy" id="10090"/>
    <lineage>
        <taxon>Eukaryota</taxon>
        <taxon>Metazoa</taxon>
        <taxon>Chordata</taxon>
        <taxon>Craniata</taxon>
        <taxon>Vertebrata</taxon>
        <taxon>Euteleostomi</taxon>
        <taxon>Mammalia</taxon>
        <taxon>Eutheria</taxon>
        <taxon>Euarchontoglires</taxon>
        <taxon>Glires</taxon>
        <taxon>Rodentia</taxon>
        <taxon>Myomorpha</taxon>
        <taxon>Muroidea</taxon>
        <taxon>Muridae</taxon>
        <taxon>Murinae</taxon>
        <taxon>Mus</taxon>
        <taxon>Mus</taxon>
    </lineage>
</organism>
<reference key="1">
    <citation type="journal article" date="2005" name="Science">
        <title>The transcriptional landscape of the mammalian genome.</title>
        <authorList>
            <person name="Carninci P."/>
            <person name="Kasukawa T."/>
            <person name="Katayama S."/>
            <person name="Gough J."/>
            <person name="Frith M.C."/>
            <person name="Maeda N."/>
            <person name="Oyama R."/>
            <person name="Ravasi T."/>
            <person name="Lenhard B."/>
            <person name="Wells C."/>
            <person name="Kodzius R."/>
            <person name="Shimokawa K."/>
            <person name="Bajic V.B."/>
            <person name="Brenner S.E."/>
            <person name="Batalov S."/>
            <person name="Forrest A.R."/>
            <person name="Zavolan M."/>
            <person name="Davis M.J."/>
            <person name="Wilming L.G."/>
            <person name="Aidinis V."/>
            <person name="Allen J.E."/>
            <person name="Ambesi-Impiombato A."/>
            <person name="Apweiler R."/>
            <person name="Aturaliya R.N."/>
            <person name="Bailey T.L."/>
            <person name="Bansal M."/>
            <person name="Baxter L."/>
            <person name="Beisel K.W."/>
            <person name="Bersano T."/>
            <person name="Bono H."/>
            <person name="Chalk A.M."/>
            <person name="Chiu K.P."/>
            <person name="Choudhary V."/>
            <person name="Christoffels A."/>
            <person name="Clutterbuck D.R."/>
            <person name="Crowe M.L."/>
            <person name="Dalla E."/>
            <person name="Dalrymple B.P."/>
            <person name="de Bono B."/>
            <person name="Della Gatta G."/>
            <person name="di Bernardo D."/>
            <person name="Down T."/>
            <person name="Engstrom P."/>
            <person name="Fagiolini M."/>
            <person name="Faulkner G."/>
            <person name="Fletcher C.F."/>
            <person name="Fukushima T."/>
            <person name="Furuno M."/>
            <person name="Futaki S."/>
            <person name="Gariboldi M."/>
            <person name="Georgii-Hemming P."/>
            <person name="Gingeras T.R."/>
            <person name="Gojobori T."/>
            <person name="Green R.E."/>
            <person name="Gustincich S."/>
            <person name="Harbers M."/>
            <person name="Hayashi Y."/>
            <person name="Hensch T.K."/>
            <person name="Hirokawa N."/>
            <person name="Hill D."/>
            <person name="Huminiecki L."/>
            <person name="Iacono M."/>
            <person name="Ikeo K."/>
            <person name="Iwama A."/>
            <person name="Ishikawa T."/>
            <person name="Jakt M."/>
            <person name="Kanapin A."/>
            <person name="Katoh M."/>
            <person name="Kawasawa Y."/>
            <person name="Kelso J."/>
            <person name="Kitamura H."/>
            <person name="Kitano H."/>
            <person name="Kollias G."/>
            <person name="Krishnan S.P."/>
            <person name="Kruger A."/>
            <person name="Kummerfeld S.K."/>
            <person name="Kurochkin I.V."/>
            <person name="Lareau L.F."/>
            <person name="Lazarevic D."/>
            <person name="Lipovich L."/>
            <person name="Liu J."/>
            <person name="Liuni S."/>
            <person name="McWilliam S."/>
            <person name="Madan Babu M."/>
            <person name="Madera M."/>
            <person name="Marchionni L."/>
            <person name="Matsuda H."/>
            <person name="Matsuzawa S."/>
            <person name="Miki H."/>
            <person name="Mignone F."/>
            <person name="Miyake S."/>
            <person name="Morris K."/>
            <person name="Mottagui-Tabar S."/>
            <person name="Mulder N."/>
            <person name="Nakano N."/>
            <person name="Nakauchi H."/>
            <person name="Ng P."/>
            <person name="Nilsson R."/>
            <person name="Nishiguchi S."/>
            <person name="Nishikawa S."/>
            <person name="Nori F."/>
            <person name="Ohara O."/>
            <person name="Okazaki Y."/>
            <person name="Orlando V."/>
            <person name="Pang K.C."/>
            <person name="Pavan W.J."/>
            <person name="Pavesi G."/>
            <person name="Pesole G."/>
            <person name="Petrovsky N."/>
            <person name="Piazza S."/>
            <person name="Reed J."/>
            <person name="Reid J.F."/>
            <person name="Ring B.Z."/>
            <person name="Ringwald M."/>
            <person name="Rost B."/>
            <person name="Ruan Y."/>
            <person name="Salzberg S.L."/>
            <person name="Sandelin A."/>
            <person name="Schneider C."/>
            <person name="Schoenbach C."/>
            <person name="Sekiguchi K."/>
            <person name="Semple C.A."/>
            <person name="Seno S."/>
            <person name="Sessa L."/>
            <person name="Sheng Y."/>
            <person name="Shibata Y."/>
            <person name="Shimada H."/>
            <person name="Shimada K."/>
            <person name="Silva D."/>
            <person name="Sinclair B."/>
            <person name="Sperling S."/>
            <person name="Stupka E."/>
            <person name="Sugiura K."/>
            <person name="Sultana R."/>
            <person name="Takenaka Y."/>
            <person name="Taki K."/>
            <person name="Tammoja K."/>
            <person name="Tan S.L."/>
            <person name="Tang S."/>
            <person name="Taylor M.S."/>
            <person name="Tegner J."/>
            <person name="Teichmann S.A."/>
            <person name="Ueda H.R."/>
            <person name="van Nimwegen E."/>
            <person name="Verardo R."/>
            <person name="Wei C.L."/>
            <person name="Yagi K."/>
            <person name="Yamanishi H."/>
            <person name="Zabarovsky E."/>
            <person name="Zhu S."/>
            <person name="Zimmer A."/>
            <person name="Hide W."/>
            <person name="Bult C."/>
            <person name="Grimmond S.M."/>
            <person name="Teasdale R.D."/>
            <person name="Liu E.T."/>
            <person name="Brusic V."/>
            <person name="Quackenbush J."/>
            <person name="Wahlestedt C."/>
            <person name="Mattick J.S."/>
            <person name="Hume D.A."/>
            <person name="Kai C."/>
            <person name="Sasaki D."/>
            <person name="Tomaru Y."/>
            <person name="Fukuda S."/>
            <person name="Kanamori-Katayama M."/>
            <person name="Suzuki M."/>
            <person name="Aoki J."/>
            <person name="Arakawa T."/>
            <person name="Iida J."/>
            <person name="Imamura K."/>
            <person name="Itoh M."/>
            <person name="Kato T."/>
            <person name="Kawaji H."/>
            <person name="Kawagashira N."/>
            <person name="Kawashima T."/>
            <person name="Kojima M."/>
            <person name="Kondo S."/>
            <person name="Konno H."/>
            <person name="Nakano K."/>
            <person name="Ninomiya N."/>
            <person name="Nishio T."/>
            <person name="Okada M."/>
            <person name="Plessy C."/>
            <person name="Shibata K."/>
            <person name="Shiraki T."/>
            <person name="Suzuki S."/>
            <person name="Tagami M."/>
            <person name="Waki K."/>
            <person name="Watahiki A."/>
            <person name="Okamura-Oho Y."/>
            <person name="Suzuki H."/>
            <person name="Kawai J."/>
            <person name="Hayashizaki Y."/>
        </authorList>
    </citation>
    <scope>NUCLEOTIDE SEQUENCE [LARGE SCALE MRNA] (ISOFORM 1)</scope>
    <source>
        <strain>C57BL/6J</strain>
        <tissue>Heart</tissue>
        <tissue>Pancreas</tissue>
    </source>
</reference>
<reference key="2">
    <citation type="journal article" date="2004" name="Genome Res.">
        <title>The status, quality, and expansion of the NIH full-length cDNA project: the Mammalian Gene Collection (MGC).</title>
        <authorList>
            <consortium name="The MGC Project Team"/>
        </authorList>
    </citation>
    <scope>NUCLEOTIDE SEQUENCE [LARGE SCALE MRNA] (ISOFORM 2)</scope>
    <source>
        <strain>C57BL/6J</strain>
        <tissue>Brain</tissue>
    </source>
</reference>
<protein>
    <recommendedName>
        <fullName>Low-density lipoprotein receptor-related protein 12</fullName>
        <shortName>LRP-12</shortName>
    </recommendedName>
</protein>
<evidence type="ECO:0000250" key="1"/>
<evidence type="ECO:0000255" key="2"/>
<evidence type="ECO:0000255" key="3">
    <source>
        <dbReference type="PROSITE-ProRule" id="PRU00059"/>
    </source>
</evidence>
<evidence type="ECO:0000255" key="4">
    <source>
        <dbReference type="PROSITE-ProRule" id="PRU00124"/>
    </source>
</evidence>
<evidence type="ECO:0000256" key="5">
    <source>
        <dbReference type="SAM" id="MobiDB-lite"/>
    </source>
</evidence>
<evidence type="ECO:0000303" key="6">
    <source>
    </source>
</evidence>
<evidence type="ECO:0000305" key="7"/>
<proteinExistence type="evidence at transcript level"/>
<accession>Q8BUJ9</accession>
<accession>Q8BWM9</accession>
<comment type="function">
    <text evidence="1">Probable receptor, which may be involved in the internalization of lipophilic molecules and/or signal transduction. May act as a tumor suppressor (By similarity).</text>
</comment>
<comment type="subunit">
    <text evidence="1">May interact with RACK1, ZFYVE9 and NMRK2.</text>
</comment>
<comment type="subcellular location">
    <subcellularLocation>
        <location evidence="1">Membrane</location>
        <topology evidence="1">Single-pass type I membrane protein</topology>
    </subcellularLocation>
    <subcellularLocation>
        <location evidence="1">Membrane</location>
        <location evidence="1">Coated pit</location>
    </subcellularLocation>
</comment>
<comment type="alternative products">
    <event type="alternative splicing"/>
    <isoform>
        <id>Q8BUJ9-1</id>
        <name>1</name>
        <sequence type="displayed"/>
    </isoform>
    <isoform>
        <id>Q8BUJ9-2</id>
        <name>2</name>
        <sequence type="described" ref="VSP_009821"/>
    </isoform>
</comment>
<comment type="similarity">
    <text evidence="7">Belongs to the LDLR family.</text>
</comment>
<comment type="sequence caution" evidence="7">
    <conflict type="frameshift">
        <sequence resource="EMBL-CDS" id="BAC39247"/>
    </conflict>
</comment>
<feature type="signal peptide" evidence="2">
    <location>
        <begin position="1"/>
        <end position="32"/>
    </location>
</feature>
<feature type="chain" id="PRO_0000017340" description="Low-density lipoprotein receptor-related protein 12">
    <location>
        <begin position="33"/>
        <end position="858"/>
    </location>
</feature>
<feature type="topological domain" description="Extracellular" evidence="2">
    <location>
        <begin position="33"/>
        <end position="492"/>
    </location>
</feature>
<feature type="transmembrane region" description="Helical" evidence="2">
    <location>
        <begin position="493"/>
        <end position="513"/>
    </location>
</feature>
<feature type="topological domain" description="Cytoplasmic" evidence="2">
    <location>
        <begin position="514"/>
        <end position="858"/>
    </location>
</feature>
<feature type="domain" description="CUB 1" evidence="3">
    <location>
        <begin position="47"/>
        <end position="159"/>
    </location>
</feature>
<feature type="domain" description="LDL-receptor class A 1" evidence="4">
    <location>
        <begin position="165"/>
        <end position="201"/>
    </location>
</feature>
<feature type="domain" description="LDL-receptor class A 2" evidence="4">
    <location>
        <begin position="214"/>
        <end position="255"/>
    </location>
</feature>
<feature type="domain" description="CUB 2" evidence="3">
    <location>
        <begin position="259"/>
        <end position="372"/>
    </location>
</feature>
<feature type="domain" description="LDL-receptor class A 3" evidence="4">
    <location>
        <begin position="374"/>
        <end position="411"/>
    </location>
</feature>
<feature type="domain" description="LDL-receptor class A 4" evidence="4">
    <location>
        <begin position="412"/>
        <end position="449"/>
    </location>
</feature>
<feature type="domain" description="LDL-receptor class A 5" evidence="4">
    <location>
        <begin position="450"/>
        <end position="486"/>
    </location>
</feature>
<feature type="region of interest" description="Disordered" evidence="5">
    <location>
        <begin position="619"/>
        <end position="721"/>
    </location>
</feature>
<feature type="region of interest" description="Disordered" evidence="5">
    <location>
        <begin position="746"/>
        <end position="767"/>
    </location>
</feature>
<feature type="compositionally biased region" description="Low complexity" evidence="5">
    <location>
        <begin position="712"/>
        <end position="721"/>
    </location>
</feature>
<feature type="compositionally biased region" description="Polar residues" evidence="5">
    <location>
        <begin position="746"/>
        <end position="755"/>
    </location>
</feature>
<feature type="glycosylation site" description="N-linked (GlcNAc...) asparagine" evidence="2">
    <location>
        <position position="75"/>
    </location>
</feature>
<feature type="glycosylation site" description="N-linked (GlcNAc...) asparagine" evidence="2">
    <location>
        <position position="284"/>
    </location>
</feature>
<feature type="glycosylation site" description="N-linked (GlcNAc...) asparagine" evidence="2">
    <location>
        <position position="366"/>
    </location>
</feature>
<feature type="glycosylation site" description="N-linked (GlcNAc...) asparagine" evidence="2">
    <location>
        <position position="409"/>
    </location>
</feature>
<feature type="glycosylation site" description="N-linked (GlcNAc...) asparagine" evidence="2">
    <location>
        <position position="441"/>
    </location>
</feature>
<feature type="disulfide bond" evidence="1">
    <location>
        <begin position="47"/>
        <end position="76"/>
    </location>
</feature>
<feature type="disulfide bond" evidence="1">
    <location>
        <begin position="103"/>
        <end position="122"/>
    </location>
</feature>
<feature type="disulfide bond" evidence="1">
    <location>
        <begin position="166"/>
        <end position="178"/>
    </location>
</feature>
<feature type="disulfide bond" evidence="1">
    <location>
        <begin position="173"/>
        <end position="191"/>
    </location>
</feature>
<feature type="disulfide bond" evidence="1">
    <location>
        <begin position="185"/>
        <end position="200"/>
    </location>
</feature>
<feature type="disulfide bond" evidence="1">
    <location>
        <begin position="215"/>
        <end position="232"/>
    </location>
</feature>
<feature type="disulfide bond" evidence="1">
    <location>
        <begin position="222"/>
        <end position="245"/>
    </location>
</feature>
<feature type="disulfide bond" evidence="1">
    <location>
        <begin position="239"/>
        <end position="254"/>
    </location>
</feature>
<feature type="disulfide bond" evidence="1">
    <location>
        <begin position="259"/>
        <end position="285"/>
    </location>
</feature>
<feature type="disulfide bond" evidence="1">
    <location>
        <begin position="375"/>
        <end position="388"/>
    </location>
</feature>
<feature type="disulfide bond" evidence="1">
    <location>
        <begin position="382"/>
        <end position="401"/>
    </location>
</feature>
<feature type="disulfide bond" evidence="1">
    <location>
        <begin position="395"/>
        <end position="410"/>
    </location>
</feature>
<feature type="disulfide bond" evidence="1">
    <location>
        <begin position="413"/>
        <end position="426"/>
    </location>
</feature>
<feature type="disulfide bond" evidence="1">
    <location>
        <begin position="420"/>
        <end position="439"/>
    </location>
</feature>
<feature type="disulfide bond" evidence="1">
    <location>
        <begin position="433"/>
        <end position="448"/>
    </location>
</feature>
<feature type="disulfide bond" evidence="1">
    <location>
        <begin position="451"/>
        <end position="463"/>
    </location>
</feature>
<feature type="disulfide bond" evidence="1">
    <location>
        <begin position="458"/>
        <end position="476"/>
    </location>
</feature>
<feature type="disulfide bond" evidence="1">
    <location>
        <begin position="470"/>
        <end position="485"/>
    </location>
</feature>
<feature type="splice variant" id="VSP_009821" description="In isoform 2." evidence="6">
    <location>
        <begin position="27"/>
        <end position="45"/>
    </location>
</feature>